<sequence>MTEAIIDLKDIAVTFDDGHQVVHAVQDVNLQIQTGDIYGIIGYSGAGKSTLVRVINLLQSPTTGQVVVNGQALQTLSPAALRQARKHVGMIFQHFNLMQSRTVMGNVIYPLLGQKISKQNRRAKALRLLKLVGLTDYAQTYPDKLSGGQKQRVAIARALVTDPQILISDEATSALDPKTTTAILELLQRVNRELGITIVLITHEMQVIKSICHHVAVMADGRIIERGPVAEVFTAPKAPLTVDFVETSTNVRAAIQRITKTIKLSELAAGQELIAFKFVGQSTKQGIVSQLSQTLGVDVNILFANIDQIDGQNVGDMIAIITGDLTAFNAAVTNMSAQGVHTRIINEEVVKGMVD</sequence>
<protein>
    <recommendedName>
        <fullName evidence="1">Methionine import ATP-binding protein MetN 1</fullName>
        <ecNumber evidence="1">7.4.2.11</ecNumber>
    </recommendedName>
</protein>
<organism>
    <name type="scientific">Lactiplantibacillus plantarum (strain ATCC BAA-793 / NCIMB 8826 / WCFS1)</name>
    <name type="common">Lactobacillus plantarum</name>
    <dbReference type="NCBI Taxonomy" id="220668"/>
    <lineage>
        <taxon>Bacteria</taxon>
        <taxon>Bacillati</taxon>
        <taxon>Bacillota</taxon>
        <taxon>Bacilli</taxon>
        <taxon>Lactobacillales</taxon>
        <taxon>Lactobacillaceae</taxon>
        <taxon>Lactiplantibacillus</taxon>
    </lineage>
</organism>
<gene>
    <name evidence="1" type="primary">metN1</name>
    <name type="ordered locus">lp_1744</name>
</gene>
<proteinExistence type="inferred from homology"/>
<name>METN1_LACPL</name>
<accession>Q88WA5</accession>
<accession>F9UP98</accession>
<reference key="1">
    <citation type="journal article" date="2003" name="Proc. Natl. Acad. Sci. U.S.A.">
        <title>Complete genome sequence of Lactobacillus plantarum WCFS1.</title>
        <authorList>
            <person name="Kleerebezem M."/>
            <person name="Boekhorst J."/>
            <person name="van Kranenburg R."/>
            <person name="Molenaar D."/>
            <person name="Kuipers O.P."/>
            <person name="Leer R."/>
            <person name="Tarchini R."/>
            <person name="Peters S.A."/>
            <person name="Sandbrink H.M."/>
            <person name="Fiers M.W.E.J."/>
            <person name="Stiekema W."/>
            <person name="Klein Lankhorst R.M."/>
            <person name="Bron P.A."/>
            <person name="Hoffer S.M."/>
            <person name="Nierop Groot M.N."/>
            <person name="Kerkhoven R."/>
            <person name="De Vries M."/>
            <person name="Ursing B."/>
            <person name="De Vos W.M."/>
            <person name="Siezen R.J."/>
        </authorList>
    </citation>
    <scope>NUCLEOTIDE SEQUENCE [LARGE SCALE GENOMIC DNA]</scope>
    <source>
        <strain>ATCC BAA-793 / NCIMB 8826 / WCFS1</strain>
    </source>
</reference>
<reference key="2">
    <citation type="journal article" date="2012" name="J. Bacteriol.">
        <title>Complete resequencing and reannotation of the Lactobacillus plantarum WCFS1 genome.</title>
        <authorList>
            <person name="Siezen R.J."/>
            <person name="Francke C."/>
            <person name="Renckens B."/>
            <person name="Boekhorst J."/>
            <person name="Wels M."/>
            <person name="Kleerebezem M."/>
            <person name="van Hijum S.A."/>
        </authorList>
    </citation>
    <scope>NUCLEOTIDE SEQUENCE [LARGE SCALE GENOMIC DNA]</scope>
    <scope>GENOME REANNOTATION</scope>
    <source>
        <strain>ATCC BAA-793 / NCIMB 8826 / WCFS1</strain>
    </source>
</reference>
<feature type="chain" id="PRO_0000270316" description="Methionine import ATP-binding protein MetN 1">
    <location>
        <begin position="1"/>
        <end position="355"/>
    </location>
</feature>
<feature type="domain" description="ABC transporter" evidence="1">
    <location>
        <begin position="6"/>
        <end position="245"/>
    </location>
</feature>
<feature type="binding site" evidence="1">
    <location>
        <begin position="42"/>
        <end position="49"/>
    </location>
    <ligand>
        <name>ATP</name>
        <dbReference type="ChEBI" id="CHEBI:30616"/>
    </ligand>
</feature>
<dbReference type="EC" id="7.4.2.11" evidence="1"/>
<dbReference type="EMBL" id="AL935263">
    <property type="protein sequence ID" value="CCC79037.1"/>
    <property type="molecule type" value="Genomic_DNA"/>
</dbReference>
<dbReference type="RefSeq" id="WP_011101532.1">
    <property type="nucleotide sequence ID" value="NC_004567.2"/>
</dbReference>
<dbReference type="RefSeq" id="YP_004889551.1">
    <property type="nucleotide sequence ID" value="NC_004567.2"/>
</dbReference>
<dbReference type="SMR" id="Q88WA5"/>
<dbReference type="STRING" id="220668.lp_1744"/>
<dbReference type="EnsemblBacteria" id="CCC79037">
    <property type="protein sequence ID" value="CCC79037"/>
    <property type="gene ID" value="lp_1744"/>
</dbReference>
<dbReference type="KEGG" id="lpl:lp_1744"/>
<dbReference type="PATRIC" id="fig|220668.9.peg.1470"/>
<dbReference type="eggNOG" id="COG1135">
    <property type="taxonomic scope" value="Bacteria"/>
</dbReference>
<dbReference type="HOGENOM" id="CLU_000604_1_3_9"/>
<dbReference type="OrthoDB" id="9802264at2"/>
<dbReference type="PhylomeDB" id="Q88WA5"/>
<dbReference type="Proteomes" id="UP000000432">
    <property type="component" value="Chromosome"/>
</dbReference>
<dbReference type="GO" id="GO:0005886">
    <property type="term" value="C:plasma membrane"/>
    <property type="evidence" value="ECO:0007669"/>
    <property type="project" value="UniProtKB-SubCell"/>
</dbReference>
<dbReference type="GO" id="GO:0033232">
    <property type="term" value="F:ABC-type D-methionine transporter activity"/>
    <property type="evidence" value="ECO:0007669"/>
    <property type="project" value="UniProtKB-EC"/>
</dbReference>
<dbReference type="GO" id="GO:0005524">
    <property type="term" value="F:ATP binding"/>
    <property type="evidence" value="ECO:0007669"/>
    <property type="project" value="UniProtKB-KW"/>
</dbReference>
<dbReference type="GO" id="GO:0016887">
    <property type="term" value="F:ATP hydrolysis activity"/>
    <property type="evidence" value="ECO:0007669"/>
    <property type="project" value="InterPro"/>
</dbReference>
<dbReference type="CDD" id="cd03258">
    <property type="entry name" value="ABC_MetN_methionine_transporter"/>
    <property type="match status" value="1"/>
</dbReference>
<dbReference type="Gene3D" id="3.30.70.260">
    <property type="match status" value="1"/>
</dbReference>
<dbReference type="Gene3D" id="3.40.50.300">
    <property type="entry name" value="P-loop containing nucleotide triphosphate hydrolases"/>
    <property type="match status" value="1"/>
</dbReference>
<dbReference type="InterPro" id="IPR003593">
    <property type="entry name" value="AAA+_ATPase"/>
</dbReference>
<dbReference type="InterPro" id="IPR003439">
    <property type="entry name" value="ABC_transporter-like_ATP-bd"/>
</dbReference>
<dbReference type="InterPro" id="IPR017871">
    <property type="entry name" value="ABC_transporter-like_CS"/>
</dbReference>
<dbReference type="InterPro" id="IPR045865">
    <property type="entry name" value="ACT-like_dom_sf"/>
</dbReference>
<dbReference type="InterPro" id="IPR041701">
    <property type="entry name" value="MetN_ABC"/>
</dbReference>
<dbReference type="InterPro" id="IPR050086">
    <property type="entry name" value="MetN_ABC_transporter-like"/>
</dbReference>
<dbReference type="InterPro" id="IPR018449">
    <property type="entry name" value="NIL_domain"/>
</dbReference>
<dbReference type="InterPro" id="IPR027417">
    <property type="entry name" value="P-loop_NTPase"/>
</dbReference>
<dbReference type="PANTHER" id="PTHR43166">
    <property type="entry name" value="AMINO ACID IMPORT ATP-BINDING PROTEIN"/>
    <property type="match status" value="1"/>
</dbReference>
<dbReference type="PANTHER" id="PTHR43166:SF30">
    <property type="entry name" value="METHIONINE IMPORT ATP-BINDING PROTEIN METN"/>
    <property type="match status" value="1"/>
</dbReference>
<dbReference type="Pfam" id="PF00005">
    <property type="entry name" value="ABC_tran"/>
    <property type="match status" value="1"/>
</dbReference>
<dbReference type="Pfam" id="PF09383">
    <property type="entry name" value="NIL"/>
    <property type="match status" value="1"/>
</dbReference>
<dbReference type="SMART" id="SM00382">
    <property type="entry name" value="AAA"/>
    <property type="match status" value="1"/>
</dbReference>
<dbReference type="SMART" id="SM00930">
    <property type="entry name" value="NIL"/>
    <property type="match status" value="1"/>
</dbReference>
<dbReference type="SUPFAM" id="SSF55021">
    <property type="entry name" value="ACT-like"/>
    <property type="match status" value="1"/>
</dbReference>
<dbReference type="SUPFAM" id="SSF52540">
    <property type="entry name" value="P-loop containing nucleoside triphosphate hydrolases"/>
    <property type="match status" value="1"/>
</dbReference>
<dbReference type="PROSITE" id="PS00211">
    <property type="entry name" value="ABC_TRANSPORTER_1"/>
    <property type="match status" value="1"/>
</dbReference>
<dbReference type="PROSITE" id="PS50893">
    <property type="entry name" value="ABC_TRANSPORTER_2"/>
    <property type="match status" value="1"/>
</dbReference>
<dbReference type="PROSITE" id="PS51264">
    <property type="entry name" value="METN"/>
    <property type="match status" value="1"/>
</dbReference>
<keyword id="KW-0029">Amino-acid transport</keyword>
<keyword id="KW-0067">ATP-binding</keyword>
<keyword id="KW-1003">Cell membrane</keyword>
<keyword id="KW-0472">Membrane</keyword>
<keyword id="KW-0547">Nucleotide-binding</keyword>
<keyword id="KW-1185">Reference proteome</keyword>
<keyword id="KW-1278">Translocase</keyword>
<keyword id="KW-0813">Transport</keyword>
<evidence type="ECO:0000255" key="1">
    <source>
        <dbReference type="HAMAP-Rule" id="MF_01719"/>
    </source>
</evidence>
<comment type="function">
    <text evidence="1">Part of the ABC transporter complex MetNIQ involved in methionine import. Responsible for energy coupling to the transport system.</text>
</comment>
<comment type="catalytic activity">
    <reaction evidence="1">
        <text>L-methionine(out) + ATP + H2O = L-methionine(in) + ADP + phosphate + H(+)</text>
        <dbReference type="Rhea" id="RHEA:29779"/>
        <dbReference type="ChEBI" id="CHEBI:15377"/>
        <dbReference type="ChEBI" id="CHEBI:15378"/>
        <dbReference type="ChEBI" id="CHEBI:30616"/>
        <dbReference type="ChEBI" id="CHEBI:43474"/>
        <dbReference type="ChEBI" id="CHEBI:57844"/>
        <dbReference type="ChEBI" id="CHEBI:456216"/>
        <dbReference type="EC" id="7.4.2.11"/>
    </reaction>
</comment>
<comment type="catalytic activity">
    <reaction evidence="1">
        <text>D-methionine(out) + ATP + H2O = D-methionine(in) + ADP + phosphate + H(+)</text>
        <dbReference type="Rhea" id="RHEA:29767"/>
        <dbReference type="ChEBI" id="CHEBI:15377"/>
        <dbReference type="ChEBI" id="CHEBI:15378"/>
        <dbReference type="ChEBI" id="CHEBI:30616"/>
        <dbReference type="ChEBI" id="CHEBI:43474"/>
        <dbReference type="ChEBI" id="CHEBI:57932"/>
        <dbReference type="ChEBI" id="CHEBI:456216"/>
        <dbReference type="EC" id="7.4.2.11"/>
    </reaction>
</comment>
<comment type="subunit">
    <text evidence="1">The complex is composed of two ATP-binding proteins (MetN), two transmembrane proteins (MetI) and a solute-binding protein (MetQ).</text>
</comment>
<comment type="subcellular location">
    <subcellularLocation>
        <location evidence="1">Cell membrane</location>
        <topology evidence="1">Peripheral membrane protein</topology>
    </subcellularLocation>
</comment>
<comment type="similarity">
    <text evidence="1">Belongs to the ABC transporter superfamily. Methionine importer (TC 3.A.1.24) family.</text>
</comment>